<proteinExistence type="evidence at protein level"/>
<dbReference type="EC" id="2.5.1.-" evidence="2"/>
<dbReference type="EMBL" id="MT024570">
    <property type="protein sequence ID" value="QIQ51364.1"/>
    <property type="molecule type" value="Genomic_DNA"/>
</dbReference>
<dbReference type="SMR" id="A0A6G9KJL7"/>
<dbReference type="OrthoDB" id="5392033at2759"/>
<dbReference type="GO" id="GO:0004659">
    <property type="term" value="F:prenyltransferase activity"/>
    <property type="evidence" value="ECO:0007669"/>
    <property type="project" value="UniProtKB-KW"/>
</dbReference>
<dbReference type="GO" id="GO:0009820">
    <property type="term" value="P:alkaloid metabolic process"/>
    <property type="evidence" value="ECO:0007669"/>
    <property type="project" value="InterPro"/>
</dbReference>
<dbReference type="CDD" id="cd13929">
    <property type="entry name" value="PT-DMATS_CymD"/>
    <property type="match status" value="1"/>
</dbReference>
<dbReference type="InterPro" id="IPR033964">
    <property type="entry name" value="Aro_prenylTrfase"/>
</dbReference>
<dbReference type="InterPro" id="IPR017795">
    <property type="entry name" value="Aro_prenylTrfase_DMATS"/>
</dbReference>
<dbReference type="InterPro" id="IPR012148">
    <property type="entry name" value="DMATS-type_fun"/>
</dbReference>
<dbReference type="NCBIfam" id="TIGR03429">
    <property type="entry name" value="arom_pren_DMATS"/>
    <property type="match status" value="1"/>
</dbReference>
<dbReference type="PANTHER" id="PTHR40627">
    <property type="entry name" value="INDOLE PRENYLTRANSFERASE TDIB-RELATED"/>
    <property type="match status" value="1"/>
</dbReference>
<dbReference type="PANTHER" id="PTHR40627:SF3">
    <property type="entry name" value="PRENYLTRANSFERASE ASQH2-RELATED"/>
    <property type="match status" value="1"/>
</dbReference>
<dbReference type="Pfam" id="PF11991">
    <property type="entry name" value="Trp_DMAT"/>
    <property type="match status" value="1"/>
</dbReference>
<dbReference type="PIRSF" id="PIRSF000509">
    <property type="entry name" value="Trp_DMAT"/>
    <property type="match status" value="1"/>
</dbReference>
<dbReference type="SFLD" id="SFLDS00036">
    <property type="entry name" value="Aromatic_Prenyltransferase"/>
    <property type="match status" value="1"/>
</dbReference>
<dbReference type="SFLD" id="SFLDG01162">
    <property type="entry name" value="I"/>
    <property type="match status" value="1"/>
</dbReference>
<accession>A0A6G9KJL7</accession>
<organism>
    <name type="scientific">Aspergillus nanangensis</name>
    <dbReference type="NCBI Taxonomy" id="2582783"/>
    <lineage>
        <taxon>Eukaryota</taxon>
        <taxon>Fungi</taxon>
        <taxon>Dikarya</taxon>
        <taxon>Ascomycota</taxon>
        <taxon>Pezizomycotina</taxon>
        <taxon>Eurotiomycetes</taxon>
        <taxon>Eurotiomycetidae</taxon>
        <taxon>Eurotiales</taxon>
        <taxon>Aspergillaceae</taxon>
        <taxon>Aspergillus</taxon>
        <taxon>Aspergillus subgen. Circumdati</taxon>
    </lineage>
</organism>
<keyword id="KW-0637">Prenyltransferase</keyword>
<keyword id="KW-0808">Transferase</keyword>
<sequence length="435" mass="49596">MAIIEPQMENQNTIPIYAREETPYDTLSKVLTFSNIDQEEYWRRIAPLLGKLLQQGSNYTIHQQYQHLCFYALHVIPLLGPFPVEGRSSYNCPLGGVGAIEPSQNFQKSGTSLRYTFEPTSTGAISGRSDPFNRFMIDDALSRFRQAGVRFNPHLYEALKKEVLLTDEEAEAICQHHDVPKMEFRAQACIAVDLDGGNMSVKLYVYPMLKATLLNIPNWELCLNAIRHVDGEGQFTSATAALETYLRTQCPTTVREQTSATTQVSYIACDLVDLQRARFKVYLFDLHVSFERIITHWTMGGRLNDEVTMSGLGILRELWDELKIPEGRRKPIERPPKPGDGPTMPLFFNYEMKAGDRLPKVKAYLPLVGMPEMPIARKLAAFFQRYGFPVEGRQYVDTLAGYFPDEDLEIVTHHQAFLSFSYSAKTGPYMTIYYH</sequence>
<reference key="1">
    <citation type="journal article" date="2020" name="J. Am. Chem. Soc.">
        <title>Biosynthesis of a new benzazepine alkaloid nanangelenin A from Aspergillus nanangensis involves an unusual l-kynurenine-incorporating NRPS catalyzing regioselective lactamization.</title>
        <authorList>
            <person name="Li H."/>
            <person name="Gilchrist C.L.M."/>
            <person name="Phan C.S."/>
            <person name="Lacey H.J."/>
            <person name="Vuong D."/>
            <person name="Moggach S.A."/>
            <person name="Lacey E."/>
            <person name="Piggott A.M."/>
            <person name="Chooi Y.H."/>
        </authorList>
    </citation>
    <scope>NUCLEOTIDE SEQUENCE [GENOMIC DNA]</scope>
    <scope>FUNCTION</scope>
    <scope>CATALYTIC ACTIVITY</scope>
    <scope>PATHWAY</scope>
    <source>
        <strain>CBS 146238 / FRR 6048 / MST FP2251</strain>
    </source>
</reference>
<protein>
    <recommendedName>
        <fullName evidence="3">Prenyltransferase nanD</fullName>
        <ecNumber evidence="2">2.5.1.-</ecNumber>
    </recommendedName>
    <alternativeName>
        <fullName evidence="3">Nanangelenin A biosynthesis cluster protein D</fullName>
    </alternativeName>
</protein>
<comment type="function">
    <text evidence="2">Prenyltransferase; part of the gene cluster that mediates the biosynthesis of the benzazepine alkaloid nanangelenin A which contains an unprecedented 3,4-dihydro-1-benzazepine-2,5-dione-N-prenyl-N-acetoxy-anthranilamide scaffold (PubMed:32182055). The first step of nanangelenin biosynthesis is catalyzed by the indoleamine 2,3-dioxygenase nanC which produces N-formyl-kynurenine through the catabolism of tryptophan (PubMed:32182055). The two-module NRPS nanA then utilizes anthranilate (Ant) and L-kynurenine (L-Kyn) to assemble the dipeptide product nanangelenin B (PubMed:32182055). The first adenylation domain of nanA (A1) loads anthranilate onto the T1 domain, while A2 loads kynurenine, generated through spontaneous nonenzymatic deformylation of the nanC-supplied N-formyl-kynurenine (PubMed:32182055). The peptide bond formation between the tethered amino acids is catalyzed by the first condensation domain (C1) between anthranilate's carbonyl carbon and kynurenine's aliphatic primary amine (PubMed:32182055). The second C domain (C2) catalyzes the final cyclization event between the aromatic amine of kynurenine and the tethered carbonyl carbon, yielding nanangelenin B (PubMed:32182055). The terminal T3 domain enhances the catalytic efficiency of C2, suggesting the T2-tethered Ant-L-Kyn is transferred to T3 prior to cyclization by C2 (PubMed:32182055). Once released from nanA, nanangelenin B is then prenylated by the prenyltransferase nanD to form nanangelenin C (PubMed:32182055). Nanangelenin C is then N-hydroxylated by the FAD-dependent monooxygenase nanF and further acetylated by the acetyltransferase nanB to yield nanangelenin F (PubMed:32182055). Finally, the N-methyltransferase nanE methylates the amide nitrogen of 1-benzazepine to convert nanangelenin F into nanangelenin A (PubMed:32182055). NanE is also able to methylate most of the intermediates of the pathway such as nanangelenin B and nanangelenin C to produce nanangelenin D and nanangelenin E, respectively (PubMed:32182055).</text>
</comment>
<comment type="pathway">
    <text evidence="2">Secondary metabolite biosynthesis.</text>
</comment>
<comment type="similarity">
    <text evidence="4">Belongs to the tryptophan dimethylallyltransferase family.</text>
</comment>
<name>NAND_ASPNN</name>
<feature type="chain" id="PRO_0000452968" description="Prenyltransferase nanD">
    <location>
        <begin position="1"/>
        <end position="435"/>
    </location>
</feature>
<feature type="binding site" evidence="1">
    <location>
        <position position="101"/>
    </location>
    <ligand>
        <name>substrate</name>
    </ligand>
</feature>
<feature type="binding site" evidence="1">
    <location>
        <position position="114"/>
    </location>
    <ligand>
        <name>dimethylallyl diphosphate</name>
        <dbReference type="ChEBI" id="CHEBI:57623"/>
    </ligand>
</feature>
<feature type="binding site" evidence="1">
    <location>
        <position position="202"/>
    </location>
    <ligand>
        <name>dimethylallyl diphosphate</name>
        <dbReference type="ChEBI" id="CHEBI:57623"/>
    </ligand>
</feature>
<feature type="binding site" evidence="1">
    <location>
        <position position="204"/>
    </location>
    <ligand>
        <name>dimethylallyl diphosphate</name>
        <dbReference type="ChEBI" id="CHEBI:57623"/>
    </ligand>
</feature>
<feature type="binding site" evidence="1">
    <location>
        <position position="206"/>
    </location>
    <ligand>
        <name>substrate</name>
    </ligand>
</feature>
<feature type="binding site" evidence="1">
    <location>
        <position position="280"/>
    </location>
    <ligand>
        <name>dimethylallyl diphosphate</name>
        <dbReference type="ChEBI" id="CHEBI:57623"/>
    </ligand>
</feature>
<feature type="binding site" evidence="1">
    <location>
        <position position="282"/>
    </location>
    <ligand>
        <name>dimethylallyl diphosphate</name>
        <dbReference type="ChEBI" id="CHEBI:57623"/>
    </ligand>
</feature>
<feature type="binding site" evidence="1">
    <location>
        <position position="364"/>
    </location>
    <ligand>
        <name>dimethylallyl diphosphate</name>
        <dbReference type="ChEBI" id="CHEBI:57623"/>
    </ligand>
</feature>
<feature type="binding site" evidence="1">
    <location>
        <position position="429"/>
    </location>
    <ligand>
        <name>dimethylallyl diphosphate</name>
        <dbReference type="ChEBI" id="CHEBI:57623"/>
    </ligand>
</feature>
<feature type="binding site" evidence="1">
    <location>
        <position position="433"/>
    </location>
    <ligand>
        <name>dimethylallyl diphosphate</name>
        <dbReference type="ChEBI" id="CHEBI:57623"/>
    </ligand>
</feature>
<gene>
    <name evidence="3" type="primary">nanD</name>
    <name type="ORF">FE257_001451</name>
</gene>
<evidence type="ECO:0000250" key="1">
    <source>
        <dbReference type="UniProtKB" id="Q4WAW7"/>
    </source>
</evidence>
<evidence type="ECO:0000269" key="2">
    <source>
    </source>
</evidence>
<evidence type="ECO:0000303" key="3">
    <source>
    </source>
</evidence>
<evidence type="ECO:0000305" key="4"/>